<evidence type="ECO:0000255" key="1">
    <source>
        <dbReference type="HAMAP-Rule" id="MF_00385"/>
    </source>
</evidence>
<evidence type="ECO:0000256" key="2">
    <source>
        <dbReference type="SAM" id="MobiDB-lite"/>
    </source>
</evidence>
<evidence type="ECO:0000305" key="3"/>
<keyword id="KW-0687">Ribonucleoprotein</keyword>
<keyword id="KW-0689">Ribosomal protein</keyword>
<reference key="1">
    <citation type="journal article" date="2007" name="Microbiology">
        <title>Comparative analysis of the Corynebacterium glutamicum group and complete genome sequence of strain R.</title>
        <authorList>
            <person name="Yukawa H."/>
            <person name="Omumasaba C.A."/>
            <person name="Nonaka H."/>
            <person name="Kos P."/>
            <person name="Okai N."/>
            <person name="Suzuki N."/>
            <person name="Suda M."/>
            <person name="Tsuge Y."/>
            <person name="Watanabe J."/>
            <person name="Ikeda Y."/>
            <person name="Vertes A.A."/>
            <person name="Inui M."/>
        </authorList>
    </citation>
    <scope>NUCLEOTIDE SEQUENCE [LARGE SCALE GENOMIC DNA]</scope>
    <source>
        <strain>R</strain>
    </source>
</reference>
<proteinExistence type="inferred from homology"/>
<feature type="chain" id="PRO_1000049248" description="Small ribosomal subunit protein bS16">
    <location>
        <begin position="1"/>
        <end position="165"/>
    </location>
</feature>
<feature type="region of interest" description="Disordered" evidence="2">
    <location>
        <begin position="110"/>
        <end position="165"/>
    </location>
</feature>
<feature type="compositionally biased region" description="Basic and acidic residues" evidence="2">
    <location>
        <begin position="129"/>
        <end position="144"/>
    </location>
</feature>
<feature type="compositionally biased region" description="Acidic residues" evidence="2">
    <location>
        <begin position="151"/>
        <end position="165"/>
    </location>
</feature>
<protein>
    <recommendedName>
        <fullName evidence="1">Small ribosomal subunit protein bS16</fullName>
    </recommendedName>
    <alternativeName>
        <fullName evidence="3">30S ribosomal protein S16</fullName>
    </alternativeName>
</protein>
<name>RS16_CORGB</name>
<comment type="similarity">
    <text evidence="1">Belongs to the bacterial ribosomal protein bS16 family.</text>
</comment>
<sequence length="165" mass="17837">MAVKIKLQRLGKIRTPHYRVVIADARTKRDGKVIENIGIYEPKAEPSVIKINSERAQHWLSVGAQPTEAVAALLKVTGDWQKFKGIEGAEGTLRVAEPKPSKLELFNQALSEANNGPTAEAITEKKKKAREDKEAKEAAEKAAAEKAAAAESEEAPAEEAAAEEA</sequence>
<accession>A4QFC1</accession>
<gene>
    <name evidence="1" type="primary">rpsP</name>
    <name type="ordered locus">cgR_1941</name>
</gene>
<organism>
    <name type="scientific">Corynebacterium glutamicum (strain R)</name>
    <dbReference type="NCBI Taxonomy" id="340322"/>
    <lineage>
        <taxon>Bacteria</taxon>
        <taxon>Bacillati</taxon>
        <taxon>Actinomycetota</taxon>
        <taxon>Actinomycetes</taxon>
        <taxon>Mycobacteriales</taxon>
        <taxon>Corynebacteriaceae</taxon>
        <taxon>Corynebacterium</taxon>
    </lineage>
</organism>
<dbReference type="EMBL" id="AP009044">
    <property type="protein sequence ID" value="BAF54937.1"/>
    <property type="molecule type" value="Genomic_DNA"/>
</dbReference>
<dbReference type="RefSeq" id="WP_011014848.1">
    <property type="nucleotide sequence ID" value="NC_009342.1"/>
</dbReference>
<dbReference type="SMR" id="A4QFC1"/>
<dbReference type="GeneID" id="1020008"/>
<dbReference type="KEGG" id="cgt:cgR_1941"/>
<dbReference type="HOGENOM" id="CLU_100590_1_1_11"/>
<dbReference type="PhylomeDB" id="A4QFC1"/>
<dbReference type="Proteomes" id="UP000006698">
    <property type="component" value="Chromosome"/>
</dbReference>
<dbReference type="GO" id="GO:0005737">
    <property type="term" value="C:cytoplasm"/>
    <property type="evidence" value="ECO:0007669"/>
    <property type="project" value="UniProtKB-ARBA"/>
</dbReference>
<dbReference type="GO" id="GO:0015935">
    <property type="term" value="C:small ribosomal subunit"/>
    <property type="evidence" value="ECO:0007669"/>
    <property type="project" value="TreeGrafter"/>
</dbReference>
<dbReference type="GO" id="GO:0003735">
    <property type="term" value="F:structural constituent of ribosome"/>
    <property type="evidence" value="ECO:0007669"/>
    <property type="project" value="InterPro"/>
</dbReference>
<dbReference type="GO" id="GO:0006412">
    <property type="term" value="P:translation"/>
    <property type="evidence" value="ECO:0007669"/>
    <property type="project" value="UniProtKB-UniRule"/>
</dbReference>
<dbReference type="Gene3D" id="3.30.1320.10">
    <property type="match status" value="1"/>
</dbReference>
<dbReference type="HAMAP" id="MF_00385">
    <property type="entry name" value="Ribosomal_bS16"/>
    <property type="match status" value="1"/>
</dbReference>
<dbReference type="InterPro" id="IPR000307">
    <property type="entry name" value="Ribosomal_bS16"/>
</dbReference>
<dbReference type="InterPro" id="IPR023803">
    <property type="entry name" value="Ribosomal_bS16_dom_sf"/>
</dbReference>
<dbReference type="NCBIfam" id="NF011093">
    <property type="entry name" value="PRK14520.1"/>
    <property type="match status" value="1"/>
</dbReference>
<dbReference type="NCBIfam" id="TIGR00002">
    <property type="entry name" value="S16"/>
    <property type="match status" value="1"/>
</dbReference>
<dbReference type="PANTHER" id="PTHR12919">
    <property type="entry name" value="30S RIBOSOMAL PROTEIN S16"/>
    <property type="match status" value="1"/>
</dbReference>
<dbReference type="PANTHER" id="PTHR12919:SF20">
    <property type="entry name" value="SMALL RIBOSOMAL SUBUNIT PROTEIN BS16M"/>
    <property type="match status" value="1"/>
</dbReference>
<dbReference type="Pfam" id="PF00886">
    <property type="entry name" value="Ribosomal_S16"/>
    <property type="match status" value="1"/>
</dbReference>
<dbReference type="SUPFAM" id="SSF54565">
    <property type="entry name" value="Ribosomal protein S16"/>
    <property type="match status" value="1"/>
</dbReference>